<evidence type="ECO:0000255" key="1">
    <source>
        <dbReference type="HAMAP-Rule" id="MF_00232"/>
    </source>
</evidence>
<organism>
    <name type="scientific">Methanopyrus kandleri (strain AV19 / DSM 6324 / JCM 9639 / NBRC 100938)</name>
    <dbReference type="NCBI Taxonomy" id="190192"/>
    <lineage>
        <taxon>Archaea</taxon>
        <taxon>Methanobacteriati</taxon>
        <taxon>Methanobacteriota</taxon>
        <taxon>Methanomada group</taxon>
        <taxon>Methanopyri</taxon>
        <taxon>Methanopyrales</taxon>
        <taxon>Methanopyraceae</taxon>
        <taxon>Methanopyrus</taxon>
    </lineage>
</organism>
<name>IF2B_METKA</name>
<sequence>MVEYDYEELLERAYEQLPEEVLEDRRFEMPKPKVSVEGKTTVIRNFKEISKKLDRDPEHITKYFLKELGTAGHVDGGRLILHGVYHPKLVEEELKNYVEEFVLCPECGKPDTKLVREDRQWILKCEACGAWSSVRRLK</sequence>
<reference key="1">
    <citation type="journal article" date="2002" name="Proc. Natl. Acad. Sci. U.S.A.">
        <title>The complete genome of hyperthermophile Methanopyrus kandleri AV19 and monophyly of archaeal methanogens.</title>
        <authorList>
            <person name="Slesarev A.I."/>
            <person name="Mezhevaya K.V."/>
            <person name="Makarova K.S."/>
            <person name="Polushin N.N."/>
            <person name="Shcherbinina O.V."/>
            <person name="Shakhova V.V."/>
            <person name="Belova G.I."/>
            <person name="Aravind L."/>
            <person name="Natale D.A."/>
            <person name="Rogozin I.B."/>
            <person name="Tatusov R.L."/>
            <person name="Wolf Y.I."/>
            <person name="Stetter K.O."/>
            <person name="Malykh A.G."/>
            <person name="Koonin E.V."/>
            <person name="Kozyavkin S.A."/>
        </authorList>
    </citation>
    <scope>NUCLEOTIDE SEQUENCE [LARGE SCALE GENOMIC DNA]</scope>
    <source>
        <strain>AV19 / DSM 6324 / JCM 9639 / NBRC 100938</strain>
    </source>
</reference>
<feature type="chain" id="PRO_0000137422" description="Translation initiation factor 2 subunit beta">
    <location>
        <begin position="1"/>
        <end position="138"/>
    </location>
</feature>
<keyword id="KW-0396">Initiation factor</keyword>
<keyword id="KW-0648">Protein biosynthesis</keyword>
<keyword id="KW-1185">Reference proteome</keyword>
<accession>Q8TWR5</accession>
<comment type="function">
    <text evidence="1">eIF-2 functions in the early steps of protein synthesis by forming a ternary complex with GTP and initiator tRNA.</text>
</comment>
<comment type="subunit">
    <text evidence="1">Heterotrimer composed of an alpha, a beta and a gamma chain.</text>
</comment>
<comment type="similarity">
    <text evidence="1">Belongs to the eIF-2-beta/eIF-5 family.</text>
</comment>
<proteinExistence type="inferred from homology"/>
<dbReference type="EMBL" id="AE009439">
    <property type="protein sequence ID" value="AAM02180.1"/>
    <property type="molecule type" value="Genomic_DNA"/>
</dbReference>
<dbReference type="RefSeq" id="WP_011019335.1">
    <property type="nucleotide sequence ID" value="NC_003551.1"/>
</dbReference>
<dbReference type="SMR" id="Q8TWR5"/>
<dbReference type="FunCoup" id="Q8TWR5">
    <property type="interactions" value="75"/>
</dbReference>
<dbReference type="STRING" id="190192.MK0967"/>
<dbReference type="PaxDb" id="190192-MK0967"/>
<dbReference type="EnsemblBacteria" id="AAM02180">
    <property type="protein sequence ID" value="AAM02180"/>
    <property type="gene ID" value="MK0967"/>
</dbReference>
<dbReference type="GeneID" id="1477068"/>
<dbReference type="KEGG" id="mka:MK0967"/>
<dbReference type="PATRIC" id="fig|190192.8.peg.1012"/>
<dbReference type="HOGENOM" id="CLU_026663_3_1_2"/>
<dbReference type="InParanoid" id="Q8TWR5"/>
<dbReference type="OrthoDB" id="38099at2157"/>
<dbReference type="Proteomes" id="UP000001826">
    <property type="component" value="Chromosome"/>
</dbReference>
<dbReference type="GO" id="GO:0003743">
    <property type="term" value="F:translation initiation factor activity"/>
    <property type="evidence" value="ECO:0007669"/>
    <property type="project" value="UniProtKB-UniRule"/>
</dbReference>
<dbReference type="FunFam" id="3.30.30.170:FF:000001">
    <property type="entry name" value="Eukaryotic translation initiation factor 2 subunit"/>
    <property type="match status" value="1"/>
</dbReference>
<dbReference type="Gene3D" id="3.30.30.170">
    <property type="match status" value="1"/>
</dbReference>
<dbReference type="HAMAP" id="MF_00232">
    <property type="entry name" value="eIF_2_beta"/>
    <property type="match status" value="1"/>
</dbReference>
<dbReference type="InterPro" id="IPR045196">
    <property type="entry name" value="IF2/IF5"/>
</dbReference>
<dbReference type="InterPro" id="IPR004458">
    <property type="entry name" value="TIF2_bsu_arc"/>
</dbReference>
<dbReference type="InterPro" id="IPR002735">
    <property type="entry name" value="Transl_init_fac_IF2/IF5_dom"/>
</dbReference>
<dbReference type="InterPro" id="IPR016189">
    <property type="entry name" value="Transl_init_fac_IF2/IF5_N"/>
</dbReference>
<dbReference type="InterPro" id="IPR016190">
    <property type="entry name" value="Transl_init_fac_IF2/IF5_Zn-bd"/>
</dbReference>
<dbReference type="NCBIfam" id="TIGR00311">
    <property type="entry name" value="aIF-2beta"/>
    <property type="match status" value="1"/>
</dbReference>
<dbReference type="NCBIfam" id="NF003067">
    <property type="entry name" value="PRK03988.1"/>
    <property type="match status" value="1"/>
</dbReference>
<dbReference type="PANTHER" id="PTHR23001">
    <property type="entry name" value="EUKARYOTIC TRANSLATION INITIATION FACTOR"/>
    <property type="match status" value="1"/>
</dbReference>
<dbReference type="PANTHER" id="PTHR23001:SF3">
    <property type="entry name" value="EUKARYOTIC TRANSLATION INITIATION FACTOR 2 SUBUNIT 2"/>
    <property type="match status" value="1"/>
</dbReference>
<dbReference type="Pfam" id="PF01873">
    <property type="entry name" value="eIF-5_eIF-2B"/>
    <property type="match status" value="1"/>
</dbReference>
<dbReference type="SMART" id="SM00653">
    <property type="entry name" value="eIF2B_5"/>
    <property type="match status" value="1"/>
</dbReference>
<dbReference type="SUPFAM" id="SSF100966">
    <property type="entry name" value="Translation initiation factor 2 beta, aIF2beta, N-terminal domain"/>
    <property type="match status" value="1"/>
</dbReference>
<dbReference type="SUPFAM" id="SSF75689">
    <property type="entry name" value="Zinc-binding domain of translation initiation factor 2 beta"/>
    <property type="match status" value="1"/>
</dbReference>
<gene>
    <name evidence="1" type="primary">eif2b</name>
    <name type="ordered locus">MK0967</name>
</gene>
<protein>
    <recommendedName>
        <fullName evidence="1">Translation initiation factor 2 subunit beta</fullName>
    </recommendedName>
    <alternativeName>
        <fullName evidence="1">aIF2-beta</fullName>
    </alternativeName>
    <alternativeName>
        <fullName evidence="1">eIF-2-beta</fullName>
    </alternativeName>
</protein>